<comment type="function">
    <text evidence="1">Catalyzes the ATP-dependent phosphorylation of N-acetyl-L-glutamate.</text>
</comment>
<comment type="catalytic activity">
    <reaction evidence="1">
        <text>N-acetyl-L-glutamate + ATP = N-acetyl-L-glutamyl 5-phosphate + ADP</text>
        <dbReference type="Rhea" id="RHEA:14629"/>
        <dbReference type="ChEBI" id="CHEBI:30616"/>
        <dbReference type="ChEBI" id="CHEBI:44337"/>
        <dbReference type="ChEBI" id="CHEBI:57936"/>
        <dbReference type="ChEBI" id="CHEBI:456216"/>
        <dbReference type="EC" id="2.7.2.8"/>
    </reaction>
</comment>
<comment type="pathway">
    <text evidence="1">Amino-acid biosynthesis; L-arginine biosynthesis; N(2)-acetyl-L-ornithine from L-glutamate: step 2/4.</text>
</comment>
<comment type="subcellular location">
    <subcellularLocation>
        <location evidence="1">Cytoplasm</location>
    </subcellularLocation>
</comment>
<comment type="similarity">
    <text evidence="1">Belongs to the acetylglutamate kinase family. ArgB subfamily.</text>
</comment>
<protein>
    <recommendedName>
        <fullName evidence="1">Acetylglutamate kinase</fullName>
        <ecNumber evidence="1">2.7.2.8</ecNumber>
    </recommendedName>
    <alternativeName>
        <fullName evidence="1">N-acetyl-L-glutamate 5-phosphotransferase</fullName>
    </alternativeName>
    <alternativeName>
        <fullName evidence="1">NAG kinase</fullName>
        <shortName evidence="1">NAGK</shortName>
    </alternativeName>
</protein>
<dbReference type="EC" id="2.7.2.8" evidence="1"/>
<dbReference type="EMBL" id="CP000227">
    <property type="protein sequence ID" value="ACM14348.1"/>
    <property type="molecule type" value="Genomic_DNA"/>
</dbReference>
<dbReference type="SMR" id="B9IXC7"/>
<dbReference type="KEGG" id="bcq:BCQ_3920"/>
<dbReference type="HOGENOM" id="CLU_053680_1_0_9"/>
<dbReference type="UniPathway" id="UPA00068">
    <property type="reaction ID" value="UER00107"/>
</dbReference>
<dbReference type="Proteomes" id="UP000000441">
    <property type="component" value="Chromosome"/>
</dbReference>
<dbReference type="GO" id="GO:0005737">
    <property type="term" value="C:cytoplasm"/>
    <property type="evidence" value="ECO:0007669"/>
    <property type="project" value="UniProtKB-SubCell"/>
</dbReference>
<dbReference type="GO" id="GO:0003991">
    <property type="term" value="F:acetylglutamate kinase activity"/>
    <property type="evidence" value="ECO:0007669"/>
    <property type="project" value="UniProtKB-UniRule"/>
</dbReference>
<dbReference type="GO" id="GO:0005524">
    <property type="term" value="F:ATP binding"/>
    <property type="evidence" value="ECO:0007669"/>
    <property type="project" value="UniProtKB-UniRule"/>
</dbReference>
<dbReference type="GO" id="GO:0042450">
    <property type="term" value="P:arginine biosynthetic process via ornithine"/>
    <property type="evidence" value="ECO:0007669"/>
    <property type="project" value="UniProtKB-UniRule"/>
</dbReference>
<dbReference type="GO" id="GO:0006526">
    <property type="term" value="P:L-arginine biosynthetic process"/>
    <property type="evidence" value="ECO:0007669"/>
    <property type="project" value="UniProtKB-UniPathway"/>
</dbReference>
<dbReference type="CDD" id="cd04238">
    <property type="entry name" value="AAK_NAGK-like"/>
    <property type="match status" value="1"/>
</dbReference>
<dbReference type="FunFam" id="3.40.1160.10:FF:000034">
    <property type="entry name" value="Acetylglutamate kinase"/>
    <property type="match status" value="1"/>
</dbReference>
<dbReference type="Gene3D" id="3.40.1160.10">
    <property type="entry name" value="Acetylglutamate kinase-like"/>
    <property type="match status" value="1"/>
</dbReference>
<dbReference type="HAMAP" id="MF_00082">
    <property type="entry name" value="ArgB"/>
    <property type="match status" value="1"/>
</dbReference>
<dbReference type="InterPro" id="IPR036393">
    <property type="entry name" value="AceGlu_kinase-like_sf"/>
</dbReference>
<dbReference type="InterPro" id="IPR004662">
    <property type="entry name" value="AcgluKinase_fam"/>
</dbReference>
<dbReference type="InterPro" id="IPR037528">
    <property type="entry name" value="ArgB"/>
</dbReference>
<dbReference type="InterPro" id="IPR001048">
    <property type="entry name" value="Asp/Glu/Uridylate_kinase"/>
</dbReference>
<dbReference type="NCBIfam" id="TIGR00761">
    <property type="entry name" value="argB"/>
    <property type="match status" value="1"/>
</dbReference>
<dbReference type="PANTHER" id="PTHR23342">
    <property type="entry name" value="N-ACETYLGLUTAMATE SYNTHASE"/>
    <property type="match status" value="1"/>
</dbReference>
<dbReference type="PANTHER" id="PTHR23342:SF0">
    <property type="entry name" value="N-ACETYLGLUTAMATE SYNTHASE, MITOCHONDRIAL"/>
    <property type="match status" value="1"/>
</dbReference>
<dbReference type="Pfam" id="PF00696">
    <property type="entry name" value="AA_kinase"/>
    <property type="match status" value="1"/>
</dbReference>
<dbReference type="PIRSF" id="PIRSF000728">
    <property type="entry name" value="NAGK"/>
    <property type="match status" value="1"/>
</dbReference>
<dbReference type="SUPFAM" id="SSF53633">
    <property type="entry name" value="Carbamate kinase-like"/>
    <property type="match status" value="1"/>
</dbReference>
<organism>
    <name type="scientific">Bacillus cereus (strain Q1)</name>
    <dbReference type="NCBI Taxonomy" id="361100"/>
    <lineage>
        <taxon>Bacteria</taxon>
        <taxon>Bacillati</taxon>
        <taxon>Bacillota</taxon>
        <taxon>Bacilli</taxon>
        <taxon>Bacillales</taxon>
        <taxon>Bacillaceae</taxon>
        <taxon>Bacillus</taxon>
        <taxon>Bacillus cereus group</taxon>
    </lineage>
</organism>
<proteinExistence type="inferred from homology"/>
<accession>B9IXC7</accession>
<feature type="chain" id="PRO_1000118336" description="Acetylglutamate kinase">
    <location>
        <begin position="1"/>
        <end position="255"/>
    </location>
</feature>
<feature type="binding site" evidence="1">
    <location>
        <begin position="40"/>
        <end position="41"/>
    </location>
    <ligand>
        <name>substrate</name>
    </ligand>
</feature>
<feature type="binding site" evidence="1">
    <location>
        <position position="62"/>
    </location>
    <ligand>
        <name>substrate</name>
    </ligand>
</feature>
<feature type="binding site" evidence="1">
    <location>
        <position position="153"/>
    </location>
    <ligand>
        <name>substrate</name>
    </ligand>
</feature>
<feature type="site" description="Transition state stabilizer" evidence="1">
    <location>
        <position position="8"/>
    </location>
</feature>
<feature type="site" description="Transition state stabilizer" evidence="1">
    <location>
        <position position="212"/>
    </location>
</feature>
<keyword id="KW-0028">Amino-acid biosynthesis</keyword>
<keyword id="KW-0055">Arginine biosynthesis</keyword>
<keyword id="KW-0067">ATP-binding</keyword>
<keyword id="KW-0963">Cytoplasm</keyword>
<keyword id="KW-0418">Kinase</keyword>
<keyword id="KW-0547">Nucleotide-binding</keyword>
<keyword id="KW-0808">Transferase</keyword>
<reference key="1">
    <citation type="journal article" date="2009" name="J. Bacteriol.">
        <title>Complete genome sequence of the extremophilic Bacillus cereus strain Q1 with industrial applications.</title>
        <authorList>
            <person name="Xiong Z."/>
            <person name="Jiang Y."/>
            <person name="Qi D."/>
            <person name="Lu H."/>
            <person name="Yang F."/>
            <person name="Yang J."/>
            <person name="Chen L."/>
            <person name="Sun L."/>
            <person name="Xu X."/>
            <person name="Xue Y."/>
            <person name="Zhu Y."/>
            <person name="Jin Q."/>
        </authorList>
    </citation>
    <scope>NUCLEOTIDE SEQUENCE [LARGE SCALE GENOMIC DNA]</scope>
    <source>
        <strain>Q1</strain>
    </source>
</reference>
<sequence length="255" mass="27432">MSDYIVVKCGGSMLDQLNDLFFDCIKKLQQKYKVVIVHGGGPEIDAQLKDCNINAEKRDGLRVTPKEVMDVVQMVLCGSTNKKLVMNLQKHNLRAVGCSGCDGNLLQVQPVSEEIGYVGEVRYVETALLKGLINMNYIPVIAPVGINDNEIYNINADTAAAGIAAALSAKELIFITDVDGVLHEGKLVKKTDEFEIVNFIENGVITGGMIPKVQAALASLKMGVQKVSIVNGTKDFTEVTGECIGTTVTRGVSIA</sequence>
<name>ARGB_BACCQ</name>
<gene>
    <name evidence="1" type="primary">argB</name>
    <name type="ordered locus">BCQ_3920</name>
</gene>
<evidence type="ECO:0000255" key="1">
    <source>
        <dbReference type="HAMAP-Rule" id="MF_00082"/>
    </source>
</evidence>